<gene>
    <name evidence="1" type="primary">pyrE</name>
    <name type="ordered locus">LEPBI_I2428</name>
</gene>
<protein>
    <recommendedName>
        <fullName evidence="1">Orotate phosphoribosyltransferase</fullName>
        <shortName evidence="1">OPRT</shortName>
        <shortName evidence="1">OPRTase</shortName>
        <ecNumber evidence="1">2.4.2.10</ecNumber>
    </recommendedName>
</protein>
<proteinExistence type="inferred from homology"/>
<reference key="1">
    <citation type="journal article" date="2008" name="PLoS ONE">
        <title>Genome sequence of the saprophyte Leptospira biflexa provides insights into the evolution of Leptospira and the pathogenesis of leptospirosis.</title>
        <authorList>
            <person name="Picardeau M."/>
            <person name="Bulach D.M."/>
            <person name="Bouchier C."/>
            <person name="Zuerner R.L."/>
            <person name="Zidane N."/>
            <person name="Wilson P.J."/>
            <person name="Creno S."/>
            <person name="Kuczek E.S."/>
            <person name="Bommezzadri S."/>
            <person name="Davis J.C."/>
            <person name="McGrath A."/>
            <person name="Johnson M.J."/>
            <person name="Boursaux-Eude C."/>
            <person name="Seemann T."/>
            <person name="Rouy Z."/>
            <person name="Coppel R.L."/>
            <person name="Rood J.I."/>
            <person name="Lajus A."/>
            <person name="Davies J.K."/>
            <person name="Medigue C."/>
            <person name="Adler B."/>
        </authorList>
    </citation>
    <scope>NUCLEOTIDE SEQUENCE [LARGE SCALE GENOMIC DNA]</scope>
    <source>
        <strain>Patoc 1 / ATCC 23582 / Paris</strain>
    </source>
</reference>
<accession>B0SL24</accession>
<dbReference type="EC" id="2.4.2.10" evidence="1"/>
<dbReference type="EMBL" id="CP000786">
    <property type="protein sequence ID" value="ABZ98517.1"/>
    <property type="molecule type" value="Genomic_DNA"/>
</dbReference>
<dbReference type="RefSeq" id="WP_012389378.1">
    <property type="nucleotide sequence ID" value="NC_010602.1"/>
</dbReference>
<dbReference type="SMR" id="B0SL24"/>
<dbReference type="STRING" id="456481.LEPBI_I2428"/>
<dbReference type="KEGG" id="lbi:LEPBI_I2428"/>
<dbReference type="HOGENOM" id="CLU_074878_2_0_12"/>
<dbReference type="OrthoDB" id="9802134at2"/>
<dbReference type="BioCyc" id="LBIF456481:LEPBI_RS11990-MONOMER"/>
<dbReference type="UniPathway" id="UPA00070">
    <property type="reaction ID" value="UER00119"/>
</dbReference>
<dbReference type="Proteomes" id="UP000001847">
    <property type="component" value="Chromosome I"/>
</dbReference>
<dbReference type="GO" id="GO:0000287">
    <property type="term" value="F:magnesium ion binding"/>
    <property type="evidence" value="ECO:0007669"/>
    <property type="project" value="UniProtKB-UniRule"/>
</dbReference>
<dbReference type="GO" id="GO:0004588">
    <property type="term" value="F:orotate phosphoribosyltransferase activity"/>
    <property type="evidence" value="ECO:0007669"/>
    <property type="project" value="UniProtKB-UniRule"/>
</dbReference>
<dbReference type="GO" id="GO:0044205">
    <property type="term" value="P:'de novo' UMP biosynthetic process"/>
    <property type="evidence" value="ECO:0007669"/>
    <property type="project" value="UniProtKB-UniRule"/>
</dbReference>
<dbReference type="GO" id="GO:0019856">
    <property type="term" value="P:pyrimidine nucleobase biosynthetic process"/>
    <property type="evidence" value="ECO:0007669"/>
    <property type="project" value="TreeGrafter"/>
</dbReference>
<dbReference type="CDD" id="cd06223">
    <property type="entry name" value="PRTases_typeI"/>
    <property type="match status" value="1"/>
</dbReference>
<dbReference type="Gene3D" id="3.40.50.2020">
    <property type="match status" value="1"/>
</dbReference>
<dbReference type="HAMAP" id="MF_01208">
    <property type="entry name" value="PyrE"/>
    <property type="match status" value="1"/>
</dbReference>
<dbReference type="InterPro" id="IPR023031">
    <property type="entry name" value="OPRT"/>
</dbReference>
<dbReference type="InterPro" id="IPR004467">
    <property type="entry name" value="Or_phspho_trans_dom"/>
</dbReference>
<dbReference type="InterPro" id="IPR000836">
    <property type="entry name" value="PRibTrfase_dom"/>
</dbReference>
<dbReference type="InterPro" id="IPR029057">
    <property type="entry name" value="PRTase-like"/>
</dbReference>
<dbReference type="NCBIfam" id="TIGR00336">
    <property type="entry name" value="pyrE"/>
    <property type="match status" value="1"/>
</dbReference>
<dbReference type="PANTHER" id="PTHR19278">
    <property type="entry name" value="OROTATE PHOSPHORIBOSYLTRANSFERASE"/>
    <property type="match status" value="1"/>
</dbReference>
<dbReference type="PANTHER" id="PTHR19278:SF9">
    <property type="entry name" value="URIDINE 5'-MONOPHOSPHATE SYNTHASE"/>
    <property type="match status" value="1"/>
</dbReference>
<dbReference type="Pfam" id="PF00156">
    <property type="entry name" value="Pribosyltran"/>
    <property type="match status" value="1"/>
</dbReference>
<dbReference type="SUPFAM" id="SSF53271">
    <property type="entry name" value="PRTase-like"/>
    <property type="match status" value="1"/>
</dbReference>
<dbReference type="PROSITE" id="PS00103">
    <property type="entry name" value="PUR_PYR_PR_TRANSFER"/>
    <property type="match status" value="1"/>
</dbReference>
<organism>
    <name type="scientific">Leptospira biflexa serovar Patoc (strain Patoc 1 / ATCC 23582 / Paris)</name>
    <dbReference type="NCBI Taxonomy" id="456481"/>
    <lineage>
        <taxon>Bacteria</taxon>
        <taxon>Pseudomonadati</taxon>
        <taxon>Spirochaetota</taxon>
        <taxon>Spirochaetia</taxon>
        <taxon>Leptospirales</taxon>
        <taxon>Leptospiraceae</taxon>
        <taxon>Leptospira</taxon>
    </lineage>
</organism>
<keyword id="KW-0328">Glycosyltransferase</keyword>
<keyword id="KW-0460">Magnesium</keyword>
<keyword id="KW-0665">Pyrimidine biosynthesis</keyword>
<keyword id="KW-1185">Reference proteome</keyword>
<keyword id="KW-0808">Transferase</keyword>
<sequence>MSHSHRDALFQWMKTYVYRHSETPFRLASGLESQHYFNCKEITLHPERLSILAECFIEEIIPKLNIEFQAVGGLTLGADPIAYAISLGYQKRGKNVFPLVVRKESKGHGTGQQIEGFWKDIKTCLVVDDVITTGGSTLKAVKVLREVGINVTKGICILDREEGGSENLQTENVTMTSIFAKSEFF</sequence>
<comment type="function">
    <text evidence="1">Catalyzes the transfer of a ribosyl phosphate group from 5-phosphoribose 1-diphosphate to orotate, leading to the formation of orotidine monophosphate (OMP).</text>
</comment>
<comment type="catalytic activity">
    <reaction evidence="1">
        <text>orotidine 5'-phosphate + diphosphate = orotate + 5-phospho-alpha-D-ribose 1-diphosphate</text>
        <dbReference type="Rhea" id="RHEA:10380"/>
        <dbReference type="ChEBI" id="CHEBI:30839"/>
        <dbReference type="ChEBI" id="CHEBI:33019"/>
        <dbReference type="ChEBI" id="CHEBI:57538"/>
        <dbReference type="ChEBI" id="CHEBI:58017"/>
        <dbReference type="EC" id="2.4.2.10"/>
    </reaction>
</comment>
<comment type="cofactor">
    <cofactor evidence="1">
        <name>Mg(2+)</name>
        <dbReference type="ChEBI" id="CHEBI:18420"/>
    </cofactor>
</comment>
<comment type="pathway">
    <text evidence="1">Pyrimidine metabolism; UMP biosynthesis via de novo pathway; UMP from orotate: step 1/2.</text>
</comment>
<comment type="subunit">
    <text evidence="1">Homodimer.</text>
</comment>
<comment type="similarity">
    <text evidence="1">Belongs to the purine/pyrimidine phosphoribosyltransferase family. PyrE subfamily.</text>
</comment>
<evidence type="ECO:0000255" key="1">
    <source>
        <dbReference type="HAMAP-Rule" id="MF_01208"/>
    </source>
</evidence>
<name>PYRE_LEPBP</name>
<feature type="chain" id="PRO_1000138803" description="Orotate phosphoribosyltransferase">
    <location>
        <begin position="1"/>
        <end position="185"/>
    </location>
</feature>
<feature type="binding site" evidence="1">
    <location>
        <position position="102"/>
    </location>
    <ligand>
        <name>5-phospho-alpha-D-ribose 1-diphosphate</name>
        <dbReference type="ChEBI" id="CHEBI:58017"/>
        <note>ligand shared between dimeric partners</note>
    </ligand>
</feature>
<feature type="binding site" description="in other chain" evidence="1">
    <location>
        <position position="103"/>
    </location>
    <ligand>
        <name>5-phospho-alpha-D-ribose 1-diphosphate</name>
        <dbReference type="ChEBI" id="CHEBI:58017"/>
        <note>ligand shared between dimeric partners</note>
    </ligand>
</feature>
<feature type="binding site" evidence="1">
    <location>
        <position position="106"/>
    </location>
    <ligand>
        <name>5-phospho-alpha-D-ribose 1-diphosphate</name>
        <dbReference type="ChEBI" id="CHEBI:58017"/>
        <note>ligand shared between dimeric partners</note>
    </ligand>
</feature>
<feature type="binding site" evidence="1">
    <location>
        <position position="108"/>
    </location>
    <ligand>
        <name>5-phospho-alpha-D-ribose 1-diphosphate</name>
        <dbReference type="ChEBI" id="CHEBI:58017"/>
        <note>ligand shared between dimeric partners</note>
    </ligand>
</feature>
<feature type="binding site" description="in other chain" evidence="1">
    <location>
        <begin position="128"/>
        <end position="136"/>
    </location>
    <ligand>
        <name>5-phospho-alpha-D-ribose 1-diphosphate</name>
        <dbReference type="ChEBI" id="CHEBI:58017"/>
        <note>ligand shared between dimeric partners</note>
    </ligand>
</feature>
<feature type="binding site" evidence="1">
    <location>
        <position position="132"/>
    </location>
    <ligand>
        <name>orotate</name>
        <dbReference type="ChEBI" id="CHEBI:30839"/>
    </ligand>
</feature>
<feature type="binding site" evidence="1">
    <location>
        <position position="160"/>
    </location>
    <ligand>
        <name>orotate</name>
        <dbReference type="ChEBI" id="CHEBI:30839"/>
    </ligand>
</feature>